<keyword id="KW-1185">Reference proteome</keyword>
<keyword id="KW-0677">Repeat</keyword>
<keyword id="KW-0853">WD repeat</keyword>
<accession>P73595</accession>
<name>Y1410_SYNY3</name>
<dbReference type="EMBL" id="BA000022">
    <property type="protein sequence ID" value="BAA17639.1"/>
    <property type="molecule type" value="Genomic_DNA"/>
</dbReference>
<dbReference type="PIR" id="S77305">
    <property type="entry name" value="S77305"/>
</dbReference>
<dbReference type="SMR" id="P73595"/>
<dbReference type="IntAct" id="P73595">
    <property type="interactions" value="1"/>
</dbReference>
<dbReference type="STRING" id="1148.gene:10498506"/>
<dbReference type="PaxDb" id="1148-1652719"/>
<dbReference type="EnsemblBacteria" id="BAA17639">
    <property type="protein sequence ID" value="BAA17639"/>
    <property type="gene ID" value="BAA17639"/>
</dbReference>
<dbReference type="KEGG" id="syn:slr1410"/>
<dbReference type="eggNOG" id="COG2319">
    <property type="taxonomic scope" value="Bacteria"/>
</dbReference>
<dbReference type="InParanoid" id="P73595"/>
<dbReference type="PhylomeDB" id="P73595"/>
<dbReference type="Proteomes" id="UP000001425">
    <property type="component" value="Chromosome"/>
</dbReference>
<dbReference type="GO" id="GO:0030288">
    <property type="term" value="C:outer membrane-bounded periplasmic space"/>
    <property type="evidence" value="ECO:0007005"/>
    <property type="project" value="UniProtKB"/>
</dbReference>
<dbReference type="Gene3D" id="2.130.10.10">
    <property type="entry name" value="YVTN repeat-like/Quinoprotein amine dehydrogenase"/>
    <property type="match status" value="2"/>
</dbReference>
<dbReference type="InterPro" id="IPR015943">
    <property type="entry name" value="WD40/YVTN_repeat-like_dom_sf"/>
</dbReference>
<dbReference type="InterPro" id="IPR019775">
    <property type="entry name" value="WD40_repeat_CS"/>
</dbReference>
<dbReference type="InterPro" id="IPR036322">
    <property type="entry name" value="WD40_repeat_dom_sf"/>
</dbReference>
<dbReference type="InterPro" id="IPR001680">
    <property type="entry name" value="WD40_rpt"/>
</dbReference>
<dbReference type="PANTHER" id="PTHR19879">
    <property type="entry name" value="TRANSCRIPTION INITIATION FACTOR TFIID"/>
    <property type="match status" value="1"/>
</dbReference>
<dbReference type="PANTHER" id="PTHR19879:SF9">
    <property type="entry name" value="TRANSCRIPTION INITIATION FACTOR TFIID SUBUNIT 5"/>
    <property type="match status" value="1"/>
</dbReference>
<dbReference type="Pfam" id="PF00400">
    <property type="entry name" value="WD40"/>
    <property type="match status" value="5"/>
</dbReference>
<dbReference type="SMART" id="SM00320">
    <property type="entry name" value="WD40"/>
    <property type="match status" value="6"/>
</dbReference>
<dbReference type="SUPFAM" id="SSF50978">
    <property type="entry name" value="WD40 repeat-like"/>
    <property type="match status" value="1"/>
</dbReference>
<dbReference type="PROSITE" id="PS00678">
    <property type="entry name" value="WD_REPEATS_1"/>
    <property type="match status" value="2"/>
</dbReference>
<dbReference type="PROSITE" id="PS50082">
    <property type="entry name" value="WD_REPEATS_2"/>
    <property type="match status" value="4"/>
</dbReference>
<dbReference type="PROSITE" id="PS50294">
    <property type="entry name" value="WD_REPEATS_REGION"/>
    <property type="match status" value="1"/>
</dbReference>
<protein>
    <recommendedName>
        <fullName>Uncharacterized WD repeat-containing protein slr1410</fullName>
    </recommendedName>
</protein>
<sequence>MKHKFLVSFLLGLTISFAGAQVIAKTPSVNNAPVARSVNQSPIQLEVIKSYQGHTLKGEAIIQIHYSQDGNYLLSTATDGLAKLWTADGELVREFAGKPVAMIFNGAFSRDGKAIITAGYNGVARIWDVQGNVLGEILGHTSAVTDVVFLSDDMGVVTSSDDGTIEGWSNIKEPLFTVTRPGVSRNMDFNAQTNLIAVTQDIGEITLLNPAGKVVRIIETDQGRLNDVDFSQDGKLLVTAGFDGTARVFNLDGQEILKIDVLDDGWVTGVAINQDNLIATVSDDGILRVWNLQGQLLGQYNPNLERLGSVSFHPNGKNLAIAAYHGTIILLELQ</sequence>
<reference key="1">
    <citation type="journal article" date="1996" name="DNA Res.">
        <title>Sequence analysis of the genome of the unicellular cyanobacterium Synechocystis sp. strain PCC6803. II. Sequence determination of the entire genome and assignment of potential protein-coding regions.</title>
        <authorList>
            <person name="Kaneko T."/>
            <person name="Sato S."/>
            <person name="Kotani H."/>
            <person name="Tanaka A."/>
            <person name="Asamizu E."/>
            <person name="Nakamura Y."/>
            <person name="Miyajima N."/>
            <person name="Hirosawa M."/>
            <person name="Sugiura M."/>
            <person name="Sasamoto S."/>
            <person name="Kimura T."/>
            <person name="Hosouchi T."/>
            <person name="Matsuno A."/>
            <person name="Muraki A."/>
            <person name="Nakazaki N."/>
            <person name="Naruo K."/>
            <person name="Okumura S."/>
            <person name="Shimpo S."/>
            <person name="Takeuchi C."/>
            <person name="Wada T."/>
            <person name="Watanabe A."/>
            <person name="Yamada M."/>
            <person name="Yasuda M."/>
            <person name="Tabata S."/>
        </authorList>
    </citation>
    <scope>NUCLEOTIDE SEQUENCE [LARGE SCALE GENOMIC DNA]</scope>
    <source>
        <strain>ATCC 27184 / PCC 6803 / Kazusa</strain>
    </source>
</reference>
<gene>
    <name type="ordered locus">slr1410</name>
</gene>
<organism>
    <name type="scientific">Synechocystis sp. (strain ATCC 27184 / PCC 6803 / Kazusa)</name>
    <dbReference type="NCBI Taxonomy" id="1111708"/>
    <lineage>
        <taxon>Bacteria</taxon>
        <taxon>Bacillati</taxon>
        <taxon>Cyanobacteriota</taxon>
        <taxon>Cyanophyceae</taxon>
        <taxon>Synechococcales</taxon>
        <taxon>Merismopediaceae</taxon>
        <taxon>Synechocystis</taxon>
    </lineage>
</organism>
<proteinExistence type="predicted"/>
<feature type="chain" id="PRO_0000051519" description="Uncharacterized WD repeat-containing protein slr1410">
    <location>
        <begin position="1"/>
        <end position="334"/>
    </location>
</feature>
<feature type="repeat" description="WD 1">
    <location>
        <begin position="56"/>
        <end position="86"/>
    </location>
</feature>
<feature type="repeat" description="WD 2">
    <location>
        <begin position="98"/>
        <end position="128"/>
    </location>
</feature>
<feature type="repeat" description="WD 3">
    <location>
        <begin position="139"/>
        <end position="169"/>
    </location>
</feature>
<feature type="repeat" description="WD 4">
    <location>
        <begin position="220"/>
        <end position="250"/>
    </location>
</feature>
<feature type="repeat" description="WD 5">
    <location>
        <begin position="262"/>
        <end position="291"/>
    </location>
</feature>